<name>MURG_LEGPH</name>
<sequence>MSPSIVFTGGGTAGHVTPNIALIKEFRKEGWNVEYIGSVSGIEKEMIEPLDIPFHGVSSGKLRRYFSLKNLLDPFKIVLGIIQSSLLFYKIKPDVVFSKGGFVAFPVVVGAWLNRIPVVAHESDMSPGLANRLSFPFVNKICLTFDAGKKYFKRQDKIEVTGTPIRQQLLTGNRMKGLELCGFNSSKPCLLVVGGSLGAGSINSCIRSALKQLTSEFQVIHLCGKGKLDSSLVGVEGYCQFEYANEELADLFAASSVVISRAGANSLYEILALGKPHILIPISSQVSRGDQIQNARYFQGLGISVVIQDELLKADVLLQAVQDVMRKKDEIDNKIKALKIESATDKIVAIIKEQAHVQTPRIV</sequence>
<comment type="function">
    <text evidence="1">Cell wall formation. Catalyzes the transfer of a GlcNAc subunit on undecaprenyl-pyrophosphoryl-MurNAc-pentapeptide (lipid intermediate I) to form undecaprenyl-pyrophosphoryl-MurNAc-(pentapeptide)GlcNAc (lipid intermediate II).</text>
</comment>
<comment type="catalytic activity">
    <reaction evidence="1">
        <text>di-trans,octa-cis-undecaprenyl diphospho-N-acetyl-alpha-D-muramoyl-L-alanyl-D-glutamyl-meso-2,6-diaminopimeloyl-D-alanyl-D-alanine + UDP-N-acetyl-alpha-D-glucosamine = di-trans,octa-cis-undecaprenyl diphospho-[N-acetyl-alpha-D-glucosaminyl-(1-&gt;4)]-N-acetyl-alpha-D-muramoyl-L-alanyl-D-glutamyl-meso-2,6-diaminopimeloyl-D-alanyl-D-alanine + UDP + H(+)</text>
        <dbReference type="Rhea" id="RHEA:31227"/>
        <dbReference type="ChEBI" id="CHEBI:15378"/>
        <dbReference type="ChEBI" id="CHEBI:57705"/>
        <dbReference type="ChEBI" id="CHEBI:58223"/>
        <dbReference type="ChEBI" id="CHEBI:61387"/>
        <dbReference type="ChEBI" id="CHEBI:61388"/>
        <dbReference type="EC" id="2.4.1.227"/>
    </reaction>
</comment>
<comment type="pathway">
    <text evidence="1">Cell wall biogenesis; peptidoglycan biosynthesis.</text>
</comment>
<comment type="subcellular location">
    <subcellularLocation>
        <location evidence="1">Cell inner membrane</location>
        <topology evidence="1">Peripheral membrane protein</topology>
        <orientation evidence="1">Cytoplasmic side</orientation>
    </subcellularLocation>
</comment>
<comment type="similarity">
    <text evidence="1">Belongs to the glycosyltransferase 28 family. MurG subfamily.</text>
</comment>
<evidence type="ECO:0000255" key="1">
    <source>
        <dbReference type="HAMAP-Rule" id="MF_00033"/>
    </source>
</evidence>
<accession>Q5ZXC4</accession>
<protein>
    <recommendedName>
        <fullName evidence="1">UDP-N-acetylglucosamine--N-acetylmuramyl-(pentapeptide) pyrophosphoryl-undecaprenol N-acetylglucosamine transferase</fullName>
        <ecNumber evidence="1">2.4.1.227</ecNumber>
    </recommendedName>
    <alternativeName>
        <fullName evidence="1">Undecaprenyl-PP-MurNAc-pentapeptide-UDPGlcNAc GlcNAc transferase</fullName>
    </alternativeName>
</protein>
<keyword id="KW-0131">Cell cycle</keyword>
<keyword id="KW-0132">Cell division</keyword>
<keyword id="KW-0997">Cell inner membrane</keyword>
<keyword id="KW-1003">Cell membrane</keyword>
<keyword id="KW-0133">Cell shape</keyword>
<keyword id="KW-0961">Cell wall biogenesis/degradation</keyword>
<keyword id="KW-0328">Glycosyltransferase</keyword>
<keyword id="KW-0472">Membrane</keyword>
<keyword id="KW-0573">Peptidoglycan synthesis</keyword>
<keyword id="KW-1185">Reference proteome</keyword>
<keyword id="KW-0808">Transferase</keyword>
<dbReference type="EC" id="2.4.1.227" evidence="1"/>
<dbReference type="EMBL" id="AE017354">
    <property type="protein sequence ID" value="AAU26896.1"/>
    <property type="molecule type" value="Genomic_DNA"/>
</dbReference>
<dbReference type="RefSeq" id="WP_010946544.1">
    <property type="nucleotide sequence ID" value="NC_002942.5"/>
</dbReference>
<dbReference type="RefSeq" id="YP_094843.1">
    <property type="nucleotide sequence ID" value="NC_002942.5"/>
</dbReference>
<dbReference type="SMR" id="Q5ZXC4"/>
<dbReference type="STRING" id="272624.lpg0808"/>
<dbReference type="CAZy" id="GT28">
    <property type="family name" value="Glycosyltransferase Family 28"/>
</dbReference>
<dbReference type="PaxDb" id="272624-lpg0808"/>
<dbReference type="KEGG" id="lpn:lpg0808"/>
<dbReference type="PATRIC" id="fig|272624.6.peg.837"/>
<dbReference type="eggNOG" id="COG0707">
    <property type="taxonomic scope" value="Bacteria"/>
</dbReference>
<dbReference type="HOGENOM" id="CLU_037404_0_0_6"/>
<dbReference type="OrthoDB" id="9808936at2"/>
<dbReference type="UniPathway" id="UPA00219"/>
<dbReference type="Proteomes" id="UP000000609">
    <property type="component" value="Chromosome"/>
</dbReference>
<dbReference type="GO" id="GO:0005886">
    <property type="term" value="C:plasma membrane"/>
    <property type="evidence" value="ECO:0007669"/>
    <property type="project" value="UniProtKB-SubCell"/>
</dbReference>
<dbReference type="GO" id="GO:0051991">
    <property type="term" value="F:UDP-N-acetyl-D-glucosamine:N-acetylmuramoyl-L-alanyl-D-glutamyl-meso-2,6-diaminopimelyl-D-alanyl-D-alanine-diphosphoundecaprenol 4-beta-N-acetylglucosaminlytransferase activity"/>
    <property type="evidence" value="ECO:0007669"/>
    <property type="project" value="RHEA"/>
</dbReference>
<dbReference type="GO" id="GO:0050511">
    <property type="term" value="F:undecaprenyldiphospho-muramoylpentapeptide beta-N-acetylglucosaminyltransferase activity"/>
    <property type="evidence" value="ECO:0007669"/>
    <property type="project" value="UniProtKB-UniRule"/>
</dbReference>
<dbReference type="GO" id="GO:0005975">
    <property type="term" value="P:carbohydrate metabolic process"/>
    <property type="evidence" value="ECO:0007669"/>
    <property type="project" value="InterPro"/>
</dbReference>
<dbReference type="GO" id="GO:0051301">
    <property type="term" value="P:cell division"/>
    <property type="evidence" value="ECO:0007669"/>
    <property type="project" value="UniProtKB-KW"/>
</dbReference>
<dbReference type="GO" id="GO:0071555">
    <property type="term" value="P:cell wall organization"/>
    <property type="evidence" value="ECO:0007669"/>
    <property type="project" value="UniProtKB-KW"/>
</dbReference>
<dbReference type="GO" id="GO:0030259">
    <property type="term" value="P:lipid glycosylation"/>
    <property type="evidence" value="ECO:0007669"/>
    <property type="project" value="UniProtKB-UniRule"/>
</dbReference>
<dbReference type="GO" id="GO:0009252">
    <property type="term" value="P:peptidoglycan biosynthetic process"/>
    <property type="evidence" value="ECO:0007669"/>
    <property type="project" value="UniProtKB-UniRule"/>
</dbReference>
<dbReference type="GO" id="GO:0008360">
    <property type="term" value="P:regulation of cell shape"/>
    <property type="evidence" value="ECO:0007669"/>
    <property type="project" value="UniProtKB-KW"/>
</dbReference>
<dbReference type="CDD" id="cd03785">
    <property type="entry name" value="GT28_MurG"/>
    <property type="match status" value="1"/>
</dbReference>
<dbReference type="Gene3D" id="3.40.50.2000">
    <property type="entry name" value="Glycogen Phosphorylase B"/>
    <property type="match status" value="2"/>
</dbReference>
<dbReference type="HAMAP" id="MF_00033">
    <property type="entry name" value="MurG"/>
    <property type="match status" value="1"/>
</dbReference>
<dbReference type="InterPro" id="IPR006009">
    <property type="entry name" value="GlcNAc_MurG"/>
</dbReference>
<dbReference type="InterPro" id="IPR007235">
    <property type="entry name" value="Glyco_trans_28_C"/>
</dbReference>
<dbReference type="InterPro" id="IPR004276">
    <property type="entry name" value="GlycoTrans_28_N"/>
</dbReference>
<dbReference type="NCBIfam" id="NF009102">
    <property type="entry name" value="PRK12446.1"/>
    <property type="match status" value="1"/>
</dbReference>
<dbReference type="PANTHER" id="PTHR21015:SF27">
    <property type="entry name" value="UDP-N-ACETYLGLUCOSAMINE--N-ACETYLMURAMYL-(PENTAPEPTIDE) PYROPHOSPHORYL-UNDECAPRENOL N-ACETYLGLUCOSAMINE TRANSFERASE"/>
    <property type="match status" value="1"/>
</dbReference>
<dbReference type="PANTHER" id="PTHR21015">
    <property type="entry name" value="UDP-N-ACETYLGLUCOSAMINE--N-ACETYLMURAMYL-(PENTAPEPTIDE) PYROPHOSPHORYL-UNDECAPRENOL N-ACETYLGLUCOSAMINE TRANSFERASE 1"/>
    <property type="match status" value="1"/>
</dbReference>
<dbReference type="Pfam" id="PF04101">
    <property type="entry name" value="Glyco_tran_28_C"/>
    <property type="match status" value="1"/>
</dbReference>
<dbReference type="Pfam" id="PF03033">
    <property type="entry name" value="Glyco_transf_28"/>
    <property type="match status" value="1"/>
</dbReference>
<dbReference type="SUPFAM" id="SSF53756">
    <property type="entry name" value="UDP-Glycosyltransferase/glycogen phosphorylase"/>
    <property type="match status" value="1"/>
</dbReference>
<feature type="chain" id="PRO_0000225065" description="UDP-N-acetylglucosamine--N-acetylmuramyl-(pentapeptide) pyrophosphoryl-undecaprenol N-acetylglucosamine transferase">
    <location>
        <begin position="1"/>
        <end position="363"/>
    </location>
</feature>
<feature type="binding site" evidence="1">
    <location>
        <begin position="12"/>
        <end position="14"/>
    </location>
    <ligand>
        <name>UDP-N-acetyl-alpha-D-glucosamine</name>
        <dbReference type="ChEBI" id="CHEBI:57705"/>
    </ligand>
</feature>
<feature type="binding site" evidence="1">
    <location>
        <position position="166"/>
    </location>
    <ligand>
        <name>UDP-N-acetyl-alpha-D-glucosamine</name>
        <dbReference type="ChEBI" id="CHEBI:57705"/>
    </ligand>
</feature>
<feature type="binding site" evidence="1">
    <location>
        <position position="196"/>
    </location>
    <ligand>
        <name>UDP-N-acetyl-alpha-D-glucosamine</name>
        <dbReference type="ChEBI" id="CHEBI:57705"/>
    </ligand>
</feature>
<feature type="binding site" evidence="1">
    <location>
        <position position="291"/>
    </location>
    <ligand>
        <name>UDP-N-acetyl-alpha-D-glucosamine</name>
        <dbReference type="ChEBI" id="CHEBI:57705"/>
    </ligand>
</feature>
<reference key="1">
    <citation type="journal article" date="2004" name="Science">
        <title>The genomic sequence of the accidental pathogen Legionella pneumophila.</title>
        <authorList>
            <person name="Chien M."/>
            <person name="Morozova I."/>
            <person name="Shi S."/>
            <person name="Sheng H."/>
            <person name="Chen J."/>
            <person name="Gomez S.M."/>
            <person name="Asamani G."/>
            <person name="Hill K."/>
            <person name="Nuara J."/>
            <person name="Feder M."/>
            <person name="Rineer J."/>
            <person name="Greenberg J.J."/>
            <person name="Steshenko V."/>
            <person name="Park S.H."/>
            <person name="Zhao B."/>
            <person name="Teplitskaya E."/>
            <person name="Edwards J.R."/>
            <person name="Pampou S."/>
            <person name="Georghiou A."/>
            <person name="Chou I.-C."/>
            <person name="Iannuccilli W."/>
            <person name="Ulz M.E."/>
            <person name="Kim D.H."/>
            <person name="Geringer-Sameth A."/>
            <person name="Goldsberry C."/>
            <person name="Morozov P."/>
            <person name="Fischer S.G."/>
            <person name="Segal G."/>
            <person name="Qu X."/>
            <person name="Rzhetsky A."/>
            <person name="Zhang P."/>
            <person name="Cayanis E."/>
            <person name="De Jong P.J."/>
            <person name="Ju J."/>
            <person name="Kalachikov S."/>
            <person name="Shuman H.A."/>
            <person name="Russo J.J."/>
        </authorList>
    </citation>
    <scope>NUCLEOTIDE SEQUENCE [LARGE SCALE GENOMIC DNA]</scope>
    <source>
        <strain>Philadelphia 1 / ATCC 33152 / DSM 7513</strain>
    </source>
</reference>
<organism>
    <name type="scientific">Legionella pneumophila subsp. pneumophila (strain Philadelphia 1 / ATCC 33152 / DSM 7513)</name>
    <dbReference type="NCBI Taxonomy" id="272624"/>
    <lineage>
        <taxon>Bacteria</taxon>
        <taxon>Pseudomonadati</taxon>
        <taxon>Pseudomonadota</taxon>
        <taxon>Gammaproteobacteria</taxon>
        <taxon>Legionellales</taxon>
        <taxon>Legionellaceae</taxon>
        <taxon>Legionella</taxon>
    </lineage>
</organism>
<proteinExistence type="inferred from homology"/>
<gene>
    <name evidence="1" type="primary">murG</name>
    <name type="ordered locus">lpg0808</name>
</gene>